<sequence length="76" mass="8103">MEIPKFLLIAIIVVGFSGSLTWAHPLAIADPDAEAIADAEAFADAEAEAFPPLLLLAGLFSLPALQHYIETNWING</sequence>
<evidence type="ECO:0000250" key="1">
    <source>
        <dbReference type="UniProtKB" id="A0A8U0LTF0"/>
    </source>
</evidence>
<evidence type="ECO:0000255" key="2"/>
<evidence type="ECO:0000303" key="3">
    <source>
    </source>
</evidence>
<evidence type="ECO:0000305" key="4">
    <source>
    </source>
</evidence>
<evidence type="ECO:0000312" key="5">
    <source>
        <dbReference type="EMBL" id="UPH34066.1"/>
    </source>
</evidence>
<reference evidence="5" key="1">
    <citation type="journal article" date="2023" name="Nat. Commun.">
        <title>Ant venoms contain vertebrate-selective pain-causing sodium channel toxins.</title>
        <authorList>
            <person name="Robinson S.D."/>
            <person name="Deuis J.R."/>
            <person name="Touchard A."/>
            <person name="Keramidas A."/>
            <person name="Mueller A."/>
            <person name="Schroeder C.I."/>
            <person name="Barasse V."/>
            <person name="Walker A.A."/>
            <person name="Brinkwirth N."/>
            <person name="Jami S."/>
            <person name="Bonnafe E."/>
            <person name="Treilhou M."/>
            <person name="Undheim E.A.B."/>
            <person name="Schmidt J.O."/>
            <person name="King G.F."/>
            <person name="Vetter I."/>
        </authorList>
    </citation>
    <scope>NUCLEOTIDE SEQUENCE [MRNA]</scope>
    <scope>PROBABLE AMIDATION AT ASN-75</scope>
    <source>
        <tissue>Venom gland</tissue>
    </source>
</reference>
<organism>
    <name type="scientific">Rhytidoponera metallica</name>
    <name type="common">Australian green-headed ant</name>
    <name type="synonym">Ponera metallica</name>
    <dbReference type="NCBI Taxonomy" id="148364"/>
    <lineage>
        <taxon>Eukaryota</taxon>
        <taxon>Metazoa</taxon>
        <taxon>Ecdysozoa</taxon>
        <taxon>Arthropoda</taxon>
        <taxon>Hexapoda</taxon>
        <taxon>Insecta</taxon>
        <taxon>Pterygota</taxon>
        <taxon>Neoptera</taxon>
        <taxon>Endopterygota</taxon>
        <taxon>Hymenoptera</taxon>
        <taxon>Apocrita</taxon>
        <taxon>Aculeata</taxon>
        <taxon>Formicoidea</taxon>
        <taxon>Formicidae</taxon>
        <taxon>Ectatomminae</taxon>
        <taxon>Ectatommini</taxon>
        <taxon>Rhytidoponera</taxon>
    </lineage>
</organism>
<accession>A0A8U0LTF5</accession>
<dbReference type="EMBL" id="MW317033">
    <property type="protein sequence ID" value="UPH34066.1"/>
    <property type="molecule type" value="mRNA"/>
</dbReference>
<dbReference type="GO" id="GO:0005576">
    <property type="term" value="C:extracellular region"/>
    <property type="evidence" value="ECO:0007669"/>
    <property type="project" value="UniProtKB-SubCell"/>
</dbReference>
<dbReference type="GO" id="GO:0017080">
    <property type="term" value="F:sodium channel regulator activity"/>
    <property type="evidence" value="ECO:0007669"/>
    <property type="project" value="UniProtKB-KW"/>
</dbReference>
<dbReference type="GO" id="GO:0090729">
    <property type="term" value="F:toxin activity"/>
    <property type="evidence" value="ECO:0007669"/>
    <property type="project" value="UniProtKB-KW"/>
</dbReference>
<keyword id="KW-0027">Amidation</keyword>
<keyword id="KW-0872">Ion channel impairing toxin</keyword>
<keyword id="KW-0528">Neurotoxin</keyword>
<keyword id="KW-0964">Secreted</keyword>
<keyword id="KW-0732">Signal</keyword>
<keyword id="KW-0800">Toxin</keyword>
<keyword id="KW-0738">Voltage-gated sodium channel impairing toxin</keyword>
<proteinExistence type="evidence at protein level"/>
<feature type="signal peptide" evidence="2">
    <location>
        <begin position="1"/>
        <end position="23"/>
    </location>
</feature>
<feature type="propeptide" id="PRO_0000459150" evidence="4">
    <location>
        <begin position="24"/>
        <end position="49"/>
    </location>
</feature>
<feature type="peptide" id="PRO_0000459151" description="Ectatotoxin-Rm4b" evidence="4">
    <location>
        <begin position="50"/>
        <end position="75"/>
    </location>
</feature>
<feature type="modified residue" description="Asparagine amide" evidence="4">
    <location>
        <position position="75"/>
    </location>
</feature>
<comment type="function">
    <text evidence="1">Vertebrate selective toxin that causes pain by targeting tetrodotoxin (TTX)-sensitive sodium channels in peripheral sensory neurons. Converts the normally rapidly activating and inactivating sodium channel current into one that does not inactivate. Is active on both Nav1.6/SCN8A and Nav1.7/SCN9A, with a much potent activity on Nav1.6/SCN8A (EC(50)=196 nM on human channels) than on Nav1.7/SCN9A (EC(50)=1.9 uM on human and EC(50)=1.2 uM on mouse channels). On these channels, causes a sustained current, an increase in peak current amplitude and a hyperpolarising shift in the voltage-dependence of channel activation. Toxin-induced hNav1.6/SCN8A and hNav1.7/SCN9A persistent currents are slowly reversible with repeated wash steps over 30 minutes. In vivo, intraplantar injection into mice causes dose-dependent spontaneous nocifensive behaviors which are gradual in onset, reaching near maximal at 30 minutes post-injection. These nocifensive behaviors decrease with coinjection of TTX. When tested on insects, intrathoracic injection into blowflies (Lucilia caesar) does not cause paralysis or death (up to a dose of 200 nmol/g).</text>
</comment>
<comment type="subcellular location">
    <subcellularLocation>
        <location evidence="4">Secreted</location>
    </subcellularLocation>
</comment>
<comment type="tissue specificity">
    <text evidence="4">Expressed by the venom gland.</text>
</comment>
<comment type="miscellaneous">
    <text evidence="1">Negative results: Show a very weak activity on hNav1.8/SCN10A (EC(50)=8.4 uM). At 1 uM, also very weakly inhibits hNav1.9/SCN11A inactivation.</text>
</comment>
<name>RM4B_RHYMT</name>
<protein>
    <recommendedName>
        <fullName evidence="3">Ectatotoxin-Rm4b</fullName>
        <shortName evidence="3">ECTX1-Rm4b</shortName>
        <shortName evidence="5">Venom peptide precursor ECTX1-Rm4b</shortName>
    </recommendedName>
</protein>